<proteinExistence type="inferred from homology"/>
<keyword id="KW-0687">Ribonucleoprotein</keyword>
<keyword id="KW-0689">Ribosomal protein</keyword>
<keyword id="KW-0694">RNA-binding</keyword>
<keyword id="KW-0699">rRNA-binding</keyword>
<feature type="chain" id="PRO_1000087064" description="Large ribosomal subunit protein uL6">
    <location>
        <begin position="1"/>
        <end position="177"/>
    </location>
</feature>
<protein>
    <recommendedName>
        <fullName evidence="1">Large ribosomal subunit protein uL6</fullName>
    </recommendedName>
    <alternativeName>
        <fullName evidence="2">50S ribosomal protein L6</fullName>
    </alternativeName>
</protein>
<gene>
    <name evidence="1" type="primary">rplF</name>
    <name type="ordered locus">Sbal195_0215</name>
</gene>
<sequence length="177" mass="18911">MSRVAKAPVSIPAGVEVTLNEQTLTVKGGKGSLTRVINNAVNVVIEAGVVKFLPVEGVSNAWAQAGTTRALVNNMVVGVSQGFERKLKLVGVGYRAKLVGSDIDLTLGFSHPLVHKLPAGVTAECPSQTDIVLRGVDKQLIGQVAAEIRGYRPPEPYKGKGVRYDDEVVRRKEAKKK</sequence>
<accession>A9KWB7</accession>
<organism>
    <name type="scientific">Shewanella baltica (strain OS195)</name>
    <dbReference type="NCBI Taxonomy" id="399599"/>
    <lineage>
        <taxon>Bacteria</taxon>
        <taxon>Pseudomonadati</taxon>
        <taxon>Pseudomonadota</taxon>
        <taxon>Gammaproteobacteria</taxon>
        <taxon>Alteromonadales</taxon>
        <taxon>Shewanellaceae</taxon>
        <taxon>Shewanella</taxon>
    </lineage>
</organism>
<reference key="1">
    <citation type="submission" date="2007-11" db="EMBL/GenBank/DDBJ databases">
        <title>Complete sequence of chromosome of Shewanella baltica OS195.</title>
        <authorList>
            <consortium name="US DOE Joint Genome Institute"/>
            <person name="Copeland A."/>
            <person name="Lucas S."/>
            <person name="Lapidus A."/>
            <person name="Barry K."/>
            <person name="Glavina del Rio T."/>
            <person name="Dalin E."/>
            <person name="Tice H."/>
            <person name="Pitluck S."/>
            <person name="Chain P."/>
            <person name="Malfatti S."/>
            <person name="Shin M."/>
            <person name="Vergez L."/>
            <person name="Schmutz J."/>
            <person name="Larimer F."/>
            <person name="Land M."/>
            <person name="Hauser L."/>
            <person name="Kyrpides N."/>
            <person name="Kim E."/>
            <person name="Brettar I."/>
            <person name="Rodrigues J."/>
            <person name="Konstantinidis K."/>
            <person name="Klappenbach J."/>
            <person name="Hofle M."/>
            <person name="Tiedje J."/>
            <person name="Richardson P."/>
        </authorList>
    </citation>
    <scope>NUCLEOTIDE SEQUENCE [LARGE SCALE GENOMIC DNA]</scope>
    <source>
        <strain>OS195</strain>
    </source>
</reference>
<evidence type="ECO:0000255" key="1">
    <source>
        <dbReference type="HAMAP-Rule" id="MF_01365"/>
    </source>
</evidence>
<evidence type="ECO:0000305" key="2"/>
<comment type="function">
    <text evidence="1">This protein binds to the 23S rRNA, and is important in its secondary structure. It is located near the subunit interface in the base of the L7/L12 stalk, and near the tRNA binding site of the peptidyltransferase center.</text>
</comment>
<comment type="subunit">
    <text evidence="1">Part of the 50S ribosomal subunit.</text>
</comment>
<comment type="similarity">
    <text evidence="1">Belongs to the universal ribosomal protein uL6 family.</text>
</comment>
<name>RL6_SHEB9</name>
<dbReference type="EMBL" id="CP000891">
    <property type="protein sequence ID" value="ABX47397.1"/>
    <property type="molecule type" value="Genomic_DNA"/>
</dbReference>
<dbReference type="RefSeq" id="WP_006083585.1">
    <property type="nucleotide sequence ID" value="NC_009997.1"/>
</dbReference>
<dbReference type="SMR" id="A9KWB7"/>
<dbReference type="GeneID" id="11774510"/>
<dbReference type="KEGG" id="sbn:Sbal195_0215"/>
<dbReference type="HOGENOM" id="CLU_065464_1_2_6"/>
<dbReference type="Proteomes" id="UP000000770">
    <property type="component" value="Chromosome"/>
</dbReference>
<dbReference type="GO" id="GO:0022625">
    <property type="term" value="C:cytosolic large ribosomal subunit"/>
    <property type="evidence" value="ECO:0007669"/>
    <property type="project" value="TreeGrafter"/>
</dbReference>
<dbReference type="GO" id="GO:0019843">
    <property type="term" value="F:rRNA binding"/>
    <property type="evidence" value="ECO:0007669"/>
    <property type="project" value="UniProtKB-UniRule"/>
</dbReference>
<dbReference type="GO" id="GO:0003735">
    <property type="term" value="F:structural constituent of ribosome"/>
    <property type="evidence" value="ECO:0007669"/>
    <property type="project" value="InterPro"/>
</dbReference>
<dbReference type="GO" id="GO:0002181">
    <property type="term" value="P:cytoplasmic translation"/>
    <property type="evidence" value="ECO:0007669"/>
    <property type="project" value="TreeGrafter"/>
</dbReference>
<dbReference type="FunFam" id="3.90.930.12:FF:000001">
    <property type="entry name" value="50S ribosomal protein L6"/>
    <property type="match status" value="1"/>
</dbReference>
<dbReference type="FunFam" id="3.90.930.12:FF:000002">
    <property type="entry name" value="50S ribosomal protein L6"/>
    <property type="match status" value="1"/>
</dbReference>
<dbReference type="Gene3D" id="3.90.930.12">
    <property type="entry name" value="Ribosomal protein L6, alpha-beta domain"/>
    <property type="match status" value="2"/>
</dbReference>
<dbReference type="HAMAP" id="MF_01365_B">
    <property type="entry name" value="Ribosomal_uL6_B"/>
    <property type="match status" value="1"/>
</dbReference>
<dbReference type="InterPro" id="IPR000702">
    <property type="entry name" value="Ribosomal_uL6-like"/>
</dbReference>
<dbReference type="InterPro" id="IPR036789">
    <property type="entry name" value="Ribosomal_uL6-like_a/b-dom_sf"/>
</dbReference>
<dbReference type="InterPro" id="IPR020040">
    <property type="entry name" value="Ribosomal_uL6_a/b-dom"/>
</dbReference>
<dbReference type="InterPro" id="IPR019906">
    <property type="entry name" value="Ribosomal_uL6_bac-type"/>
</dbReference>
<dbReference type="InterPro" id="IPR002358">
    <property type="entry name" value="Ribosomal_uL6_CS"/>
</dbReference>
<dbReference type="NCBIfam" id="TIGR03654">
    <property type="entry name" value="L6_bact"/>
    <property type="match status" value="1"/>
</dbReference>
<dbReference type="PANTHER" id="PTHR11655">
    <property type="entry name" value="60S/50S RIBOSOMAL PROTEIN L6/L9"/>
    <property type="match status" value="1"/>
</dbReference>
<dbReference type="PANTHER" id="PTHR11655:SF14">
    <property type="entry name" value="LARGE RIBOSOMAL SUBUNIT PROTEIN UL6M"/>
    <property type="match status" value="1"/>
</dbReference>
<dbReference type="Pfam" id="PF00347">
    <property type="entry name" value="Ribosomal_L6"/>
    <property type="match status" value="2"/>
</dbReference>
<dbReference type="PIRSF" id="PIRSF002162">
    <property type="entry name" value="Ribosomal_L6"/>
    <property type="match status" value="1"/>
</dbReference>
<dbReference type="PRINTS" id="PR00059">
    <property type="entry name" value="RIBOSOMALL6"/>
</dbReference>
<dbReference type="SUPFAM" id="SSF56053">
    <property type="entry name" value="Ribosomal protein L6"/>
    <property type="match status" value="2"/>
</dbReference>
<dbReference type="PROSITE" id="PS00525">
    <property type="entry name" value="RIBOSOMAL_L6_1"/>
    <property type="match status" value="1"/>
</dbReference>